<sequence length="442" mass="51252">MAATDLERISNAEPEPRSLSLGGHVGFDSLPDQLVSKSVTQGFSFNILCVGETGIGKSTLMNTFFNTTFETEEASHHEECVRLRPQTYDLQESNVHLKLTIVDAVGFGDQINKDDSYRPIVDYIDTQFENYLQEELKIRRSLFDYHDTRIHVCLYFITPTGHSLKSLDLVTMKKLDSKVNIIPIIAKADTISKSELHKFKIKIMGELVSNGVQIYQFPTDDEAVAEINAVMNAHLPFAVVGSTEEVKVGNKLVRARQYPWGVVQVENENHCDFVKLREMLIRVNMEDLREQTHSRHYELYRRCKLEEMGFQDSDGDSQPFSLQETYEAKRKEFLSELQRKEEEMRQMFVNKVKETELELKEKERELHEKFEHLKRIHQEEKRKVEEKRRELEEETNAFNCRKAAMEALQSQALHATSQQPLRKDKDKKKVGGWSSIYSVTIP</sequence>
<gene>
    <name evidence="4" type="primary">Septin8</name>
    <name evidence="13" type="synonym">Sept8</name>
</gene>
<protein>
    <recommendedName>
        <fullName evidence="10">Septin-8</fullName>
    </recommendedName>
</protein>
<keyword id="KW-0007">Acetylation</keyword>
<keyword id="KW-0966">Cell projection</keyword>
<keyword id="KW-0175">Coiled coil</keyword>
<keyword id="KW-0963">Cytoplasm</keyword>
<keyword id="KW-0968">Cytoplasmic vesicle</keyword>
<keyword id="KW-0206">Cytoskeleton</keyword>
<keyword id="KW-0342">GTP-binding</keyword>
<keyword id="KW-0472">Membrane</keyword>
<keyword id="KW-0547">Nucleotide-binding</keyword>
<keyword id="KW-0597">Phosphoprotein</keyword>
<keyword id="KW-1185">Reference proteome</keyword>
<keyword id="KW-0770">Synapse</keyword>
<proteinExistence type="evidence at protein level"/>
<feature type="initiator methionine" description="Removed" evidence="4">
    <location>
        <position position="1"/>
    </location>
</feature>
<feature type="chain" id="PRO_0000365102" description="Septin-8" evidence="2">
    <location>
        <begin position="2"/>
        <end position="442"/>
    </location>
</feature>
<feature type="domain" description="Septin-type G" evidence="6">
    <location>
        <begin position="41"/>
        <end position="307"/>
    </location>
</feature>
<feature type="region of interest" description="Disordered" evidence="7">
    <location>
        <begin position="1"/>
        <end position="21"/>
    </location>
</feature>
<feature type="region of interest" description="G1 motif" evidence="6">
    <location>
        <begin position="51"/>
        <end position="58"/>
    </location>
</feature>
<feature type="region of interest" description="G3 motif" evidence="6">
    <location>
        <begin position="103"/>
        <end position="106"/>
    </location>
</feature>
<feature type="region of interest" description="G4 motif" evidence="6">
    <location>
        <begin position="186"/>
        <end position="189"/>
    </location>
</feature>
<feature type="region of interest" description="Disordered" evidence="7">
    <location>
        <begin position="411"/>
        <end position="442"/>
    </location>
</feature>
<feature type="coiled-coil region" evidence="5">
    <location>
        <begin position="322"/>
        <end position="407"/>
    </location>
</feature>
<feature type="compositionally biased region" description="Basic and acidic residues" evidence="7">
    <location>
        <begin position="1"/>
        <end position="16"/>
    </location>
</feature>
<feature type="compositionally biased region" description="Polar residues" evidence="7">
    <location>
        <begin position="411"/>
        <end position="420"/>
    </location>
</feature>
<feature type="binding site" evidence="2">
    <location>
        <begin position="51"/>
        <end position="58"/>
    </location>
    <ligand>
        <name>GTP</name>
        <dbReference type="ChEBI" id="CHEBI:37565"/>
    </ligand>
</feature>
<feature type="binding site" evidence="1">
    <location>
        <position position="106"/>
    </location>
    <ligand>
        <name>GTP</name>
        <dbReference type="ChEBI" id="CHEBI:37565"/>
    </ligand>
</feature>
<feature type="binding site" evidence="1">
    <location>
        <begin position="187"/>
        <end position="195"/>
    </location>
    <ligand>
        <name>GTP</name>
        <dbReference type="ChEBI" id="CHEBI:37565"/>
    </ligand>
</feature>
<feature type="binding site" evidence="2">
    <location>
        <position position="241"/>
    </location>
    <ligand>
        <name>GTP</name>
        <dbReference type="ChEBI" id="CHEBI:37565"/>
    </ligand>
</feature>
<feature type="binding site" evidence="1">
    <location>
        <position position="256"/>
    </location>
    <ligand>
        <name>GTP</name>
        <dbReference type="ChEBI" id="CHEBI:37565"/>
    </ligand>
</feature>
<feature type="modified residue" description="N-acetylalanine" evidence="4">
    <location>
        <position position="2"/>
    </location>
</feature>
<feature type="modified residue" description="Phosphoserine" evidence="14">
    <location>
        <position position="10"/>
    </location>
</feature>
<comment type="function">
    <text evidence="4 9">Filament-forming cytoskeletal GTPase (By similarity). May play a role in platelet secretion (By similarity). Seems to participate in the process of SNARE complex formation in synaptic vesicles (PubMed:19196426).</text>
</comment>
<comment type="subunit">
    <text evidence="3 4 8 9">Septins polymerize into heterooligomeric protein complexes that form filaments, and can associate with cellular membranes, actin filaments and microtubules. GTPase activity is required for filament formation (By similarity). Interacts with SEPTIN7 (PubMed:15485874). Interacts with CDK14, SEPTIN4 and SEPTIN5 (By similarity). Interacts with VAMP2; the interaction inhibits interaction of VAMP2 with SYP (PubMed:19196426). Interacts with STX1A (PubMed:19196426).</text>
</comment>
<comment type="subcellular location">
    <subcellularLocation>
        <location evidence="9">Cytoplasm</location>
    </subcellularLocation>
    <subcellularLocation>
        <location evidence="1">Cytoplasm</location>
        <location evidence="1">Cytoskeleton</location>
    </subcellularLocation>
    <subcellularLocation>
        <location evidence="9">Synapse</location>
    </subcellularLocation>
    <subcellularLocation>
        <location evidence="9">Cell projection</location>
        <location evidence="9">Axon</location>
    </subcellularLocation>
    <subcellularLocation>
        <location evidence="11">Cytoplasmic vesicle</location>
        <location evidence="11">Secretory vesicle</location>
        <location evidence="11">Synaptic vesicle membrane</location>
    </subcellularLocation>
    <subcellularLocation>
        <location evidence="9">Presynapse</location>
    </subcellularLocation>
    <text evidence="9">Expressed in axons of immature neurons, localizes to synapses in mature neurons.</text>
</comment>
<comment type="tissue specificity">
    <text evidence="9">Expressed in cerebrum, hippocampus and cerebellum (at protein level). Expressed in heart (at protein level).</text>
</comment>
<comment type="developmental stage">
    <text evidence="9">In brain, expression increases from 12.5 dpc to adulthood.</text>
</comment>
<comment type="similarity">
    <text evidence="6">Belongs to the TRAFAC class TrmE-Era-EngA-EngB-Septin-like GTPase superfamily. Septin GTPase family.</text>
</comment>
<reference evidence="10 12" key="1">
    <citation type="journal article" date="2004" name="Genome Res.">
        <title>The status, quality, and expansion of the NIH full-length cDNA project: the Mammalian Gene Collection (MGC).</title>
        <authorList>
            <consortium name="The MGC Project Team"/>
        </authorList>
    </citation>
    <scope>NUCLEOTIDE SEQUENCE [LARGE SCALE MRNA]</scope>
    <source>
        <tissue evidence="12">Brain</tissue>
    </source>
</reference>
<reference key="2">
    <citation type="journal article" date="2004" name="J. Biol. Chem.">
        <title>Biochemical and cell biological analyses of a mammalian septin complex, Sept7/9b/11.</title>
        <authorList>
            <person name="Nagata K."/>
            <person name="Asano T."/>
            <person name="Nozawa Y."/>
            <person name="Inagaki M."/>
        </authorList>
    </citation>
    <scope>INTERACTION WITH SEPTIN7</scope>
</reference>
<reference evidence="10" key="3">
    <citation type="submission" date="2008-12" db="UniProtKB">
        <authorList>
            <person name="Maurya D.K."/>
            <person name="Bhargava P."/>
        </authorList>
    </citation>
    <scope>IDENTIFICATION BY MASS SPECTROMETRY</scope>
</reference>
<reference key="4">
    <citation type="journal article" date="2009" name="J. Neurochem.">
        <title>Sept8 controls the binding of vesicle-associated membrane protein 2 to synaptophysin.</title>
        <authorList>
            <person name="Ito H."/>
            <person name="Atsuzawa K."/>
            <person name="Morishita R."/>
            <person name="Usuda N."/>
            <person name="Sudo K."/>
            <person name="Iwamoto I."/>
            <person name="Mizutani K."/>
            <person name="Katoh-Semba R."/>
            <person name="Nozawa Y."/>
            <person name="Asano T."/>
            <person name="Nagata K."/>
        </authorList>
    </citation>
    <scope>FUNCTION</scope>
    <scope>TISSUE SPECIFICITY</scope>
    <scope>SUBCELLULAR LOCATION</scope>
    <scope>DEVELOPMENTAL STAGE</scope>
    <scope>INTERACTION WITH STX1A AND VAMP2</scope>
</reference>
<reference key="5">
    <citation type="journal article" date="2012" name="Nat. Commun.">
        <title>Quantitative maps of protein phosphorylation sites across 14 different rat organs and tissues.</title>
        <authorList>
            <person name="Lundby A."/>
            <person name="Secher A."/>
            <person name="Lage K."/>
            <person name="Nordsborg N.B."/>
            <person name="Dmytriyev A."/>
            <person name="Lundby C."/>
            <person name="Olsen J.V."/>
        </authorList>
    </citation>
    <scope>PHOSPHORYLATION [LARGE SCALE ANALYSIS] AT SER-10</scope>
    <scope>IDENTIFICATION BY MASS SPECTROMETRY [LARGE SCALE ANALYSIS]</scope>
</reference>
<organism>
    <name type="scientific">Rattus norvegicus</name>
    <name type="common">Rat</name>
    <dbReference type="NCBI Taxonomy" id="10116"/>
    <lineage>
        <taxon>Eukaryota</taxon>
        <taxon>Metazoa</taxon>
        <taxon>Chordata</taxon>
        <taxon>Craniata</taxon>
        <taxon>Vertebrata</taxon>
        <taxon>Euteleostomi</taxon>
        <taxon>Mammalia</taxon>
        <taxon>Eutheria</taxon>
        <taxon>Euarchontoglires</taxon>
        <taxon>Glires</taxon>
        <taxon>Rodentia</taxon>
        <taxon>Myomorpha</taxon>
        <taxon>Muroidea</taxon>
        <taxon>Muridae</taxon>
        <taxon>Murinae</taxon>
        <taxon>Rattus</taxon>
    </lineage>
</organism>
<evidence type="ECO:0000250" key="1"/>
<evidence type="ECO:0000250" key="2">
    <source>
        <dbReference type="UniProtKB" id="Q15019"/>
    </source>
</evidence>
<evidence type="ECO:0000250" key="3">
    <source>
        <dbReference type="UniProtKB" id="Q8CHH9"/>
    </source>
</evidence>
<evidence type="ECO:0000250" key="4">
    <source>
        <dbReference type="UniProtKB" id="Q92599"/>
    </source>
</evidence>
<evidence type="ECO:0000255" key="5"/>
<evidence type="ECO:0000255" key="6">
    <source>
        <dbReference type="PROSITE-ProRule" id="PRU01056"/>
    </source>
</evidence>
<evidence type="ECO:0000256" key="7">
    <source>
        <dbReference type="SAM" id="MobiDB-lite"/>
    </source>
</evidence>
<evidence type="ECO:0000269" key="8">
    <source>
    </source>
</evidence>
<evidence type="ECO:0000269" key="9">
    <source>
    </source>
</evidence>
<evidence type="ECO:0000305" key="10"/>
<evidence type="ECO:0000305" key="11">
    <source>
    </source>
</evidence>
<evidence type="ECO:0000312" key="12">
    <source>
        <dbReference type="EMBL" id="AAI58797.1"/>
    </source>
</evidence>
<evidence type="ECO:0000312" key="13">
    <source>
        <dbReference type="RGD" id="1308449"/>
    </source>
</evidence>
<evidence type="ECO:0007744" key="14">
    <source>
    </source>
</evidence>
<dbReference type="EMBL" id="BC158796">
    <property type="protein sequence ID" value="AAI58797.1"/>
    <property type="molecule type" value="mRNA"/>
</dbReference>
<dbReference type="SMR" id="B0BNF1"/>
<dbReference type="CORUM" id="B0BNF1"/>
<dbReference type="FunCoup" id="B0BNF1">
    <property type="interactions" value="2227"/>
</dbReference>
<dbReference type="STRING" id="10116.ENSRNOP00000074199"/>
<dbReference type="iPTMnet" id="B0BNF1"/>
<dbReference type="PhosphoSitePlus" id="B0BNF1"/>
<dbReference type="jPOST" id="B0BNF1"/>
<dbReference type="PaxDb" id="10116-ENSRNOP00000063893"/>
<dbReference type="PeptideAtlas" id="B0BNF1"/>
<dbReference type="UCSC" id="RGD:1308449">
    <property type="organism name" value="rat"/>
</dbReference>
<dbReference type="AGR" id="RGD:1308449"/>
<dbReference type="RGD" id="1308449">
    <property type="gene designation" value="Septin8"/>
</dbReference>
<dbReference type="eggNOG" id="KOG3859">
    <property type="taxonomic scope" value="Eukaryota"/>
</dbReference>
<dbReference type="InParanoid" id="B0BNF1"/>
<dbReference type="PhylomeDB" id="B0BNF1"/>
<dbReference type="PRO" id="PR:B0BNF1"/>
<dbReference type="Proteomes" id="UP000002494">
    <property type="component" value="Unplaced"/>
</dbReference>
<dbReference type="GO" id="GO:0030424">
    <property type="term" value="C:axon"/>
    <property type="evidence" value="ECO:0007669"/>
    <property type="project" value="UniProtKB-SubCell"/>
</dbReference>
<dbReference type="GO" id="GO:0032153">
    <property type="term" value="C:cell division site"/>
    <property type="evidence" value="ECO:0000318"/>
    <property type="project" value="GO_Central"/>
</dbReference>
<dbReference type="GO" id="GO:0015630">
    <property type="term" value="C:microtubule cytoskeleton"/>
    <property type="evidence" value="ECO:0000318"/>
    <property type="project" value="GO_Central"/>
</dbReference>
<dbReference type="GO" id="GO:0043209">
    <property type="term" value="C:myelin sheath"/>
    <property type="evidence" value="ECO:0000314"/>
    <property type="project" value="UniProtKB"/>
</dbReference>
<dbReference type="GO" id="GO:0098793">
    <property type="term" value="C:presynapse"/>
    <property type="evidence" value="ECO:0000314"/>
    <property type="project" value="SynGO"/>
</dbReference>
<dbReference type="GO" id="GO:0031105">
    <property type="term" value="C:septin complex"/>
    <property type="evidence" value="ECO:0000266"/>
    <property type="project" value="RGD"/>
</dbReference>
<dbReference type="GO" id="GO:0005940">
    <property type="term" value="C:septin ring"/>
    <property type="evidence" value="ECO:0000318"/>
    <property type="project" value="GO_Central"/>
</dbReference>
<dbReference type="GO" id="GO:0030672">
    <property type="term" value="C:synaptic vesicle membrane"/>
    <property type="evidence" value="ECO:0007669"/>
    <property type="project" value="UniProtKB-SubCell"/>
</dbReference>
<dbReference type="GO" id="GO:0005525">
    <property type="term" value="F:GTP binding"/>
    <property type="evidence" value="ECO:0007669"/>
    <property type="project" value="UniProtKB-KW"/>
</dbReference>
<dbReference type="GO" id="GO:0003924">
    <property type="term" value="F:GTPase activity"/>
    <property type="evidence" value="ECO:0000318"/>
    <property type="project" value="GO_Central"/>
</dbReference>
<dbReference type="GO" id="GO:0060090">
    <property type="term" value="F:molecular adaptor activity"/>
    <property type="evidence" value="ECO:0000318"/>
    <property type="project" value="GO_Central"/>
</dbReference>
<dbReference type="GO" id="GO:0000149">
    <property type="term" value="F:SNARE binding"/>
    <property type="evidence" value="ECO:0000353"/>
    <property type="project" value="UniProtKB"/>
</dbReference>
<dbReference type="GO" id="GO:0061640">
    <property type="term" value="P:cytoskeleton-dependent cytokinesis"/>
    <property type="evidence" value="ECO:0000318"/>
    <property type="project" value="GO_Central"/>
</dbReference>
<dbReference type="GO" id="GO:0008104">
    <property type="term" value="P:protein localization"/>
    <property type="evidence" value="ECO:0000318"/>
    <property type="project" value="GO_Central"/>
</dbReference>
<dbReference type="GO" id="GO:0033157">
    <property type="term" value="P:regulation of intracellular protein transport"/>
    <property type="evidence" value="ECO:0000250"/>
    <property type="project" value="UniProtKB"/>
</dbReference>
<dbReference type="GO" id="GO:0031647">
    <property type="term" value="P:regulation of protein stability"/>
    <property type="evidence" value="ECO:0000250"/>
    <property type="project" value="UniProtKB"/>
</dbReference>
<dbReference type="GO" id="GO:0035542">
    <property type="term" value="P:regulation of SNARE complex assembly"/>
    <property type="evidence" value="ECO:0000314"/>
    <property type="project" value="UniProtKB"/>
</dbReference>
<dbReference type="CDD" id="cd01850">
    <property type="entry name" value="CDC_Septin"/>
    <property type="match status" value="1"/>
</dbReference>
<dbReference type="FunFam" id="3.40.50.300:FF:000036">
    <property type="entry name" value="septin-6 isoform X2"/>
    <property type="match status" value="1"/>
</dbReference>
<dbReference type="Gene3D" id="3.40.50.300">
    <property type="entry name" value="P-loop containing nucleotide triphosphate hydrolases"/>
    <property type="match status" value="1"/>
</dbReference>
<dbReference type="InterPro" id="IPR030379">
    <property type="entry name" value="G_SEPTIN_dom"/>
</dbReference>
<dbReference type="InterPro" id="IPR027417">
    <property type="entry name" value="P-loop_NTPase"/>
</dbReference>
<dbReference type="InterPro" id="IPR016491">
    <property type="entry name" value="Septin"/>
</dbReference>
<dbReference type="PANTHER" id="PTHR18884">
    <property type="entry name" value="SEPTIN"/>
    <property type="match status" value="1"/>
</dbReference>
<dbReference type="Pfam" id="PF00735">
    <property type="entry name" value="Septin"/>
    <property type="match status" value="1"/>
</dbReference>
<dbReference type="PIRSF" id="PIRSF006698">
    <property type="entry name" value="Septin"/>
    <property type="match status" value="1"/>
</dbReference>
<dbReference type="SUPFAM" id="SSF52540">
    <property type="entry name" value="P-loop containing nucleoside triphosphate hydrolases"/>
    <property type="match status" value="1"/>
</dbReference>
<dbReference type="PROSITE" id="PS51719">
    <property type="entry name" value="G_SEPTIN"/>
    <property type="match status" value="1"/>
</dbReference>
<name>SEPT8_RAT</name>
<accession>B0BNF1</accession>